<organism>
    <name type="scientific">Cellvibrio japonicus (strain Ueda107)</name>
    <name type="common">Pseudomonas fluorescens subsp. cellulosa</name>
    <dbReference type="NCBI Taxonomy" id="498211"/>
    <lineage>
        <taxon>Bacteria</taxon>
        <taxon>Pseudomonadati</taxon>
        <taxon>Pseudomonadota</taxon>
        <taxon>Gammaproteobacteria</taxon>
        <taxon>Cellvibrionales</taxon>
        <taxon>Cellvibrionaceae</taxon>
        <taxon>Cellvibrio</taxon>
    </lineage>
</organism>
<sequence>MNTSVDKILSQTAEVDQASVQPFTGSQKIYVQGSRNDIRVPMREISLDDTPTDFGGEKNPPVRVYDTSGPYTDPEVAIDLRAGLPDIRSAWIEERGDTEILSDSQSIFTRERLDDPKLAHLRFNLTRKARRAKPGMNVSQMHYAKKGIITPEMEYIAIRENMALAQVRELGVLNQQHPGMSFGANIPGEITPEFVRSEVARGRAIIPANINHVELEPMIIGRNFLVKINGNIGNSALGSSIEEEVEKLTWGARWGADTVMDLSTGKNIHETREWIIRNSHVPIGTVPIYQALEKVNGIAENLTWEIFRDTLIEQAEQGVDYFTIHAGVLLRYVPLTAKRVTGIVSRGGSIMAKWCLAHHRENFLYTHFEEICEIMKAYDVSFSLGDGLRPGSIADANDAAQFGELETLGELTEIAWKHDVQTMIEGPGHVPMHMIKENMDKQLEVCKEAPFYTLGPLTTDIAPGYDHITSGIGAAMIGWYGCAMLCYVTPKEHLGLPNKKDVKEGIITYKIAAHAADLAKGHPGAQLRDNALSKARFEFRWEDQFNLGLDPDTARAYHDETLPKESAKVAHFCSMCGPKFCSMKITQEVRDYAAQQGVNVEGISEDQLVKMIDVEAEMQEKAREFIEQGAELYHKV</sequence>
<keyword id="KW-0004">4Fe-4S</keyword>
<keyword id="KW-0408">Iron</keyword>
<keyword id="KW-0411">Iron-sulfur</keyword>
<keyword id="KW-0456">Lyase</keyword>
<keyword id="KW-0479">Metal-binding</keyword>
<keyword id="KW-1185">Reference proteome</keyword>
<keyword id="KW-0949">S-adenosyl-L-methionine</keyword>
<keyword id="KW-0784">Thiamine biosynthesis</keyword>
<keyword id="KW-0862">Zinc</keyword>
<gene>
    <name evidence="1" type="primary">thiC</name>
    <name type="ordered locus">CJA_2909</name>
</gene>
<reference key="1">
    <citation type="journal article" date="2008" name="J. Bacteriol.">
        <title>Insights into plant cell wall degradation from the genome sequence of the soil bacterium Cellvibrio japonicus.</title>
        <authorList>
            <person name="DeBoy R.T."/>
            <person name="Mongodin E.F."/>
            <person name="Fouts D.E."/>
            <person name="Tailford L.E."/>
            <person name="Khouri H."/>
            <person name="Emerson J.B."/>
            <person name="Mohamoud Y."/>
            <person name="Watkins K."/>
            <person name="Henrissat B."/>
            <person name="Gilbert H.J."/>
            <person name="Nelson K.E."/>
        </authorList>
    </citation>
    <scope>NUCLEOTIDE SEQUENCE [LARGE SCALE GENOMIC DNA]</scope>
    <source>
        <strain>Ueda107</strain>
    </source>
</reference>
<evidence type="ECO:0000255" key="1">
    <source>
        <dbReference type="HAMAP-Rule" id="MF_00089"/>
    </source>
</evidence>
<evidence type="ECO:0000256" key="2">
    <source>
        <dbReference type="SAM" id="MobiDB-lite"/>
    </source>
</evidence>
<proteinExistence type="inferred from homology"/>
<protein>
    <recommendedName>
        <fullName evidence="1">Phosphomethylpyrimidine synthase</fullName>
        <ecNumber evidence="1">4.1.99.17</ecNumber>
    </recommendedName>
    <alternativeName>
        <fullName evidence="1">Hydroxymethylpyrimidine phosphate synthase</fullName>
        <shortName evidence="1">HMP-P synthase</shortName>
        <shortName evidence="1">HMP-phosphate synthase</shortName>
        <shortName evidence="1">HMPP synthase</shortName>
    </alternativeName>
    <alternativeName>
        <fullName evidence="1">Thiamine biosynthesis protein ThiC</fullName>
    </alternativeName>
</protein>
<feature type="chain" id="PRO_1000093197" description="Phosphomethylpyrimidine synthase">
    <location>
        <begin position="1"/>
        <end position="636"/>
    </location>
</feature>
<feature type="region of interest" description="Disordered" evidence="2">
    <location>
        <begin position="48"/>
        <end position="70"/>
    </location>
</feature>
<feature type="binding site" evidence="1">
    <location>
        <position position="231"/>
    </location>
    <ligand>
        <name>substrate</name>
    </ligand>
</feature>
<feature type="binding site" evidence="1">
    <location>
        <position position="260"/>
    </location>
    <ligand>
        <name>substrate</name>
    </ligand>
</feature>
<feature type="binding site" evidence="1">
    <location>
        <position position="289"/>
    </location>
    <ligand>
        <name>substrate</name>
    </ligand>
</feature>
<feature type="binding site" evidence="1">
    <location>
        <position position="325"/>
    </location>
    <ligand>
        <name>substrate</name>
    </ligand>
</feature>
<feature type="binding site" evidence="1">
    <location>
        <begin position="345"/>
        <end position="347"/>
    </location>
    <ligand>
        <name>substrate</name>
    </ligand>
</feature>
<feature type="binding site" evidence="1">
    <location>
        <begin position="386"/>
        <end position="389"/>
    </location>
    <ligand>
        <name>substrate</name>
    </ligand>
</feature>
<feature type="binding site" evidence="1">
    <location>
        <position position="425"/>
    </location>
    <ligand>
        <name>substrate</name>
    </ligand>
</feature>
<feature type="binding site" evidence="1">
    <location>
        <position position="429"/>
    </location>
    <ligand>
        <name>Zn(2+)</name>
        <dbReference type="ChEBI" id="CHEBI:29105"/>
    </ligand>
</feature>
<feature type="binding site" evidence="1">
    <location>
        <position position="452"/>
    </location>
    <ligand>
        <name>substrate</name>
    </ligand>
</feature>
<feature type="binding site" evidence="1">
    <location>
        <position position="493"/>
    </location>
    <ligand>
        <name>Zn(2+)</name>
        <dbReference type="ChEBI" id="CHEBI:29105"/>
    </ligand>
</feature>
<feature type="binding site" evidence="1">
    <location>
        <position position="573"/>
    </location>
    <ligand>
        <name>[4Fe-4S] cluster</name>
        <dbReference type="ChEBI" id="CHEBI:49883"/>
        <note>4Fe-4S-S-AdoMet</note>
    </ligand>
</feature>
<feature type="binding site" evidence="1">
    <location>
        <position position="576"/>
    </location>
    <ligand>
        <name>[4Fe-4S] cluster</name>
        <dbReference type="ChEBI" id="CHEBI:49883"/>
        <note>4Fe-4S-S-AdoMet</note>
    </ligand>
</feature>
<feature type="binding site" evidence="1">
    <location>
        <position position="581"/>
    </location>
    <ligand>
        <name>[4Fe-4S] cluster</name>
        <dbReference type="ChEBI" id="CHEBI:49883"/>
        <note>4Fe-4S-S-AdoMet</note>
    </ligand>
</feature>
<accession>B3PCK0</accession>
<dbReference type="EC" id="4.1.99.17" evidence="1"/>
<dbReference type="EMBL" id="CP000934">
    <property type="protein sequence ID" value="ACE82982.1"/>
    <property type="molecule type" value="Genomic_DNA"/>
</dbReference>
<dbReference type="RefSeq" id="WP_012488493.1">
    <property type="nucleotide sequence ID" value="NC_010995.1"/>
</dbReference>
<dbReference type="SMR" id="B3PCK0"/>
<dbReference type="STRING" id="498211.CJA_2909"/>
<dbReference type="KEGG" id="cja:CJA_2909"/>
<dbReference type="eggNOG" id="COG0422">
    <property type="taxonomic scope" value="Bacteria"/>
</dbReference>
<dbReference type="HOGENOM" id="CLU_013181_2_1_6"/>
<dbReference type="OrthoDB" id="9805897at2"/>
<dbReference type="UniPathway" id="UPA00060"/>
<dbReference type="Proteomes" id="UP000001036">
    <property type="component" value="Chromosome"/>
</dbReference>
<dbReference type="GO" id="GO:0005829">
    <property type="term" value="C:cytosol"/>
    <property type="evidence" value="ECO:0007669"/>
    <property type="project" value="TreeGrafter"/>
</dbReference>
<dbReference type="GO" id="GO:0051539">
    <property type="term" value="F:4 iron, 4 sulfur cluster binding"/>
    <property type="evidence" value="ECO:0007669"/>
    <property type="project" value="UniProtKB-KW"/>
</dbReference>
<dbReference type="GO" id="GO:0016830">
    <property type="term" value="F:carbon-carbon lyase activity"/>
    <property type="evidence" value="ECO:0007669"/>
    <property type="project" value="InterPro"/>
</dbReference>
<dbReference type="GO" id="GO:0008270">
    <property type="term" value="F:zinc ion binding"/>
    <property type="evidence" value="ECO:0007669"/>
    <property type="project" value="UniProtKB-UniRule"/>
</dbReference>
<dbReference type="GO" id="GO:0009228">
    <property type="term" value="P:thiamine biosynthetic process"/>
    <property type="evidence" value="ECO:0007669"/>
    <property type="project" value="UniProtKB-KW"/>
</dbReference>
<dbReference type="GO" id="GO:0009229">
    <property type="term" value="P:thiamine diphosphate biosynthetic process"/>
    <property type="evidence" value="ECO:0007669"/>
    <property type="project" value="UniProtKB-UniRule"/>
</dbReference>
<dbReference type="FunFam" id="3.20.20.540:FF:000001">
    <property type="entry name" value="Phosphomethylpyrimidine synthase"/>
    <property type="match status" value="1"/>
</dbReference>
<dbReference type="Gene3D" id="6.10.250.620">
    <property type="match status" value="1"/>
</dbReference>
<dbReference type="Gene3D" id="3.20.20.540">
    <property type="entry name" value="Radical SAM ThiC family, central domain"/>
    <property type="match status" value="1"/>
</dbReference>
<dbReference type="HAMAP" id="MF_00089">
    <property type="entry name" value="ThiC"/>
    <property type="match status" value="1"/>
</dbReference>
<dbReference type="InterPro" id="IPR037509">
    <property type="entry name" value="ThiC"/>
</dbReference>
<dbReference type="InterPro" id="IPR025747">
    <property type="entry name" value="ThiC-associated_dom"/>
</dbReference>
<dbReference type="InterPro" id="IPR038521">
    <property type="entry name" value="ThiC/Bza_core_dom"/>
</dbReference>
<dbReference type="InterPro" id="IPR002817">
    <property type="entry name" value="ThiC/BzaA/B"/>
</dbReference>
<dbReference type="NCBIfam" id="NF006763">
    <property type="entry name" value="PRK09284.1"/>
    <property type="match status" value="1"/>
</dbReference>
<dbReference type="NCBIfam" id="NF009895">
    <property type="entry name" value="PRK13352.1"/>
    <property type="match status" value="1"/>
</dbReference>
<dbReference type="NCBIfam" id="TIGR00190">
    <property type="entry name" value="thiC"/>
    <property type="match status" value="1"/>
</dbReference>
<dbReference type="PANTHER" id="PTHR30557:SF1">
    <property type="entry name" value="PHOSPHOMETHYLPYRIMIDINE SYNTHASE, CHLOROPLASTIC"/>
    <property type="match status" value="1"/>
</dbReference>
<dbReference type="PANTHER" id="PTHR30557">
    <property type="entry name" value="THIAMINE BIOSYNTHESIS PROTEIN THIC"/>
    <property type="match status" value="1"/>
</dbReference>
<dbReference type="Pfam" id="PF13667">
    <property type="entry name" value="ThiC-associated"/>
    <property type="match status" value="1"/>
</dbReference>
<dbReference type="Pfam" id="PF01964">
    <property type="entry name" value="ThiC_Rad_SAM"/>
    <property type="match status" value="1"/>
</dbReference>
<dbReference type="SFLD" id="SFLDF00407">
    <property type="entry name" value="phosphomethylpyrimidine_syntha"/>
    <property type="match status" value="1"/>
</dbReference>
<dbReference type="SFLD" id="SFLDG01114">
    <property type="entry name" value="phosphomethylpyrimidine_syntha"/>
    <property type="match status" value="1"/>
</dbReference>
<dbReference type="SFLD" id="SFLDS00113">
    <property type="entry name" value="Radical_SAM_Phosphomethylpyrim"/>
    <property type="match status" value="1"/>
</dbReference>
<comment type="function">
    <text evidence="1">Catalyzes the synthesis of the hydroxymethylpyrimidine phosphate (HMP-P) moiety of thiamine from aminoimidazole ribotide (AIR) in a radical S-adenosyl-L-methionine (SAM)-dependent reaction.</text>
</comment>
<comment type="catalytic activity">
    <reaction evidence="1">
        <text>5-amino-1-(5-phospho-beta-D-ribosyl)imidazole + S-adenosyl-L-methionine = 4-amino-2-methyl-5-(phosphooxymethyl)pyrimidine + CO + 5'-deoxyadenosine + formate + L-methionine + 3 H(+)</text>
        <dbReference type="Rhea" id="RHEA:24840"/>
        <dbReference type="ChEBI" id="CHEBI:15378"/>
        <dbReference type="ChEBI" id="CHEBI:15740"/>
        <dbReference type="ChEBI" id="CHEBI:17245"/>
        <dbReference type="ChEBI" id="CHEBI:17319"/>
        <dbReference type="ChEBI" id="CHEBI:57844"/>
        <dbReference type="ChEBI" id="CHEBI:58354"/>
        <dbReference type="ChEBI" id="CHEBI:59789"/>
        <dbReference type="ChEBI" id="CHEBI:137981"/>
        <dbReference type="EC" id="4.1.99.17"/>
    </reaction>
</comment>
<comment type="cofactor">
    <cofactor evidence="1">
        <name>[4Fe-4S] cluster</name>
        <dbReference type="ChEBI" id="CHEBI:49883"/>
    </cofactor>
    <text evidence="1">Binds 1 [4Fe-4S] cluster per subunit. The cluster is coordinated with 3 cysteines and an exchangeable S-adenosyl-L-methionine.</text>
</comment>
<comment type="pathway">
    <text evidence="1">Cofactor biosynthesis; thiamine diphosphate biosynthesis.</text>
</comment>
<comment type="subunit">
    <text evidence="1">Homodimer.</text>
</comment>
<comment type="similarity">
    <text evidence="1">Belongs to the ThiC family.</text>
</comment>
<name>THIC_CELJU</name>